<protein>
    <recommendedName>
        <fullName evidence="13">Tapetal oleosin GRP-17</fullName>
        <shortName evidence="17">T-oleosin GRP-17</shortName>
    </recommendedName>
    <alternativeName>
        <fullName evidence="13">Glycine rich protein 17</fullName>
        <shortName evidence="13">AtGRP-17</shortName>
    </alternativeName>
    <alternativeName>
        <fullName evidence="14">Glycine rich protein 7</fullName>
        <shortName evidence="14">AtGRP-7</shortName>
    </alternativeName>
    <alternativeName>
        <fullName evidence="16">Oleopollenin GRP-17</fullName>
    </alternativeName>
</protein>
<dbReference type="EMBL" id="Z11858">
    <property type="protein sequence ID" value="CAA77882.1"/>
    <property type="molecule type" value="Genomic_DNA"/>
</dbReference>
<dbReference type="EMBL" id="Z11868">
    <property type="protein sequence ID" value="CAA77894.1"/>
    <property type="molecule type" value="mRNA"/>
</dbReference>
<dbReference type="EMBL" id="AL163912">
    <property type="protein sequence ID" value="CAB87942.1"/>
    <property type="molecule type" value="Genomic_DNA"/>
</dbReference>
<dbReference type="EMBL" id="CP002688">
    <property type="protein sequence ID" value="AED91171.1"/>
    <property type="molecule type" value="Genomic_DNA"/>
</dbReference>
<dbReference type="EMBL" id="CP002688">
    <property type="protein sequence ID" value="AED91172.1"/>
    <property type="molecule type" value="Genomic_DNA"/>
</dbReference>
<dbReference type="EMBL" id="AK229852">
    <property type="protein sequence ID" value="BAF01681.1"/>
    <property type="molecule type" value="mRNA"/>
</dbReference>
<dbReference type="PIR" id="S19933">
    <property type="entry name" value="S19933"/>
</dbReference>
<dbReference type="PIR" id="T49892">
    <property type="entry name" value="T49892"/>
</dbReference>
<dbReference type="RefSeq" id="NP_001119185.1">
    <molecule id="Q9LY09-2"/>
    <property type="nucleotide sequence ID" value="NM_001125713.1"/>
</dbReference>
<dbReference type="RefSeq" id="NP_196370.1">
    <molecule id="Q9LY09-1"/>
    <property type="nucleotide sequence ID" value="NM_120835.3"/>
</dbReference>
<dbReference type="BioGRID" id="15925">
    <property type="interactions" value="3"/>
</dbReference>
<dbReference type="STRING" id="3702.Q9LY09"/>
<dbReference type="iPTMnet" id="Q9LY09"/>
<dbReference type="PaxDb" id="3702-AT5G07530.1"/>
<dbReference type="ProteomicsDB" id="222299">
    <molecule id="Q9LY09-1"/>
</dbReference>
<dbReference type="EnsemblPlants" id="AT5G07530.1">
    <molecule id="Q9LY09-1"/>
    <property type="protein sequence ID" value="AT5G07530.1"/>
    <property type="gene ID" value="AT5G07530"/>
</dbReference>
<dbReference type="EnsemblPlants" id="AT5G07530.2">
    <molecule id="Q9LY09-2"/>
    <property type="protein sequence ID" value="AT5G07530.2"/>
    <property type="gene ID" value="AT5G07530"/>
</dbReference>
<dbReference type="GeneID" id="830646"/>
<dbReference type="Gramene" id="AT5G07530.1">
    <molecule id="Q9LY09-1"/>
    <property type="protein sequence ID" value="AT5G07530.1"/>
    <property type="gene ID" value="AT5G07530"/>
</dbReference>
<dbReference type="Gramene" id="AT5G07530.2">
    <molecule id="Q9LY09-2"/>
    <property type="protein sequence ID" value="AT5G07530.2"/>
    <property type="gene ID" value="AT5G07530"/>
</dbReference>
<dbReference type="KEGG" id="ath:AT5G07530"/>
<dbReference type="Araport" id="AT5G07530"/>
<dbReference type="TAIR" id="AT5G07530">
    <property type="gene designation" value="GRP17"/>
</dbReference>
<dbReference type="HOGENOM" id="CLU_532500_0_0_1"/>
<dbReference type="InParanoid" id="Q9LY09"/>
<dbReference type="OMA" id="KSNFREN"/>
<dbReference type="PRO" id="PR:Q9LY09"/>
<dbReference type="Proteomes" id="UP000006548">
    <property type="component" value="Chromosome 5"/>
</dbReference>
<dbReference type="ExpressionAtlas" id="Q9LY09">
    <property type="expression patterns" value="baseline and differential"/>
</dbReference>
<dbReference type="GO" id="GO:0031012">
    <property type="term" value="C:extracellular matrix"/>
    <property type="evidence" value="ECO:0000314"/>
    <property type="project" value="TAIR"/>
</dbReference>
<dbReference type="GO" id="GO:0005576">
    <property type="term" value="C:extracellular region"/>
    <property type="evidence" value="ECO:0007669"/>
    <property type="project" value="UniProtKB-KW"/>
</dbReference>
<dbReference type="GO" id="GO:0016020">
    <property type="term" value="C:membrane"/>
    <property type="evidence" value="ECO:0007669"/>
    <property type="project" value="UniProtKB-SubCell"/>
</dbReference>
<dbReference type="GO" id="GO:0012511">
    <property type="term" value="C:monolayer-surrounded lipid storage body"/>
    <property type="evidence" value="ECO:0007669"/>
    <property type="project" value="InterPro"/>
</dbReference>
<dbReference type="GO" id="GO:0070505">
    <property type="term" value="C:pollen coat"/>
    <property type="evidence" value="ECO:0000314"/>
    <property type="project" value="UniProtKB"/>
</dbReference>
<dbReference type="GO" id="GO:0008289">
    <property type="term" value="F:lipid binding"/>
    <property type="evidence" value="ECO:0000250"/>
    <property type="project" value="TAIR"/>
</dbReference>
<dbReference type="GO" id="GO:0048655">
    <property type="term" value="P:anther wall tapetum morphogenesis"/>
    <property type="evidence" value="ECO:0000314"/>
    <property type="project" value="UniProtKB"/>
</dbReference>
<dbReference type="GO" id="GO:0009859">
    <property type="term" value="P:pollen hydration"/>
    <property type="evidence" value="ECO:0000315"/>
    <property type="project" value="UniProtKB"/>
</dbReference>
<dbReference type="GO" id="GO:0048544">
    <property type="term" value="P:recognition of pollen"/>
    <property type="evidence" value="ECO:0000315"/>
    <property type="project" value="UniProtKB"/>
</dbReference>
<dbReference type="InterPro" id="IPR000136">
    <property type="entry name" value="Oleosin"/>
</dbReference>
<dbReference type="PANTHER" id="PTHR33203">
    <property type="entry name" value="OLEOSIN"/>
    <property type="match status" value="1"/>
</dbReference>
<dbReference type="PANTHER" id="PTHR33203:SF49">
    <property type="entry name" value="TAPETAL OLEOSIN GRP-17"/>
    <property type="match status" value="1"/>
</dbReference>
<dbReference type="Pfam" id="PF01277">
    <property type="entry name" value="Oleosin"/>
    <property type="match status" value="1"/>
</dbReference>
<dbReference type="PROSITE" id="PS00811">
    <property type="entry name" value="OLEOSINS"/>
    <property type="match status" value="1"/>
</dbReference>
<name>GRP17_ARATH</name>
<feature type="chain" id="PRO_0000420171" description="Tapetal oleosin GRP-17">
    <location>
        <begin position="1"/>
        <end position="543"/>
    </location>
</feature>
<feature type="transmembrane region" description="Helical" evidence="3">
    <location>
        <begin position="68"/>
        <end position="88"/>
    </location>
</feature>
<feature type="transmembrane region" description="Helical" evidence="3">
    <location>
        <begin position="98"/>
        <end position="118"/>
    </location>
</feature>
<feature type="transmembrane region" description="Helical" evidence="3">
    <location>
        <begin position="119"/>
        <end position="139"/>
    </location>
</feature>
<feature type="repeat" description="1">
    <location>
        <begin position="220"/>
        <end position="223"/>
    </location>
</feature>
<feature type="repeat" description="2">
    <location>
        <begin position="227"/>
        <end position="230"/>
    </location>
</feature>
<feature type="repeat" description="3">
    <location>
        <begin position="234"/>
        <end position="237"/>
    </location>
</feature>
<feature type="repeat" description="4">
    <location>
        <begin position="259"/>
        <end position="262"/>
    </location>
</feature>
<feature type="repeat" description="5">
    <location>
        <begin position="269"/>
        <end position="272"/>
    </location>
</feature>
<feature type="repeat" description="6">
    <location>
        <begin position="276"/>
        <end position="279"/>
    </location>
</feature>
<feature type="repeat" description="7">
    <location>
        <begin position="301"/>
        <end position="304"/>
    </location>
</feature>
<feature type="repeat" description="8">
    <location>
        <begin position="305"/>
        <end position="308"/>
    </location>
</feature>
<feature type="repeat" description="9">
    <location>
        <begin position="312"/>
        <end position="315"/>
    </location>
</feature>
<feature type="repeat" description="10">
    <location>
        <begin position="319"/>
        <end position="322"/>
    </location>
</feature>
<feature type="repeat" description="11">
    <location>
        <begin position="344"/>
        <end position="347"/>
    </location>
</feature>
<feature type="repeat" description="12">
    <location>
        <begin position="348"/>
        <end position="351"/>
    </location>
</feature>
<feature type="repeat" description="13">
    <location>
        <begin position="355"/>
        <end position="358"/>
    </location>
</feature>
<feature type="repeat" description="14">
    <location>
        <begin position="362"/>
        <end position="365"/>
    </location>
</feature>
<feature type="repeat" description="15">
    <location>
        <begin position="387"/>
        <end position="390"/>
    </location>
</feature>
<feature type="repeat" description="16">
    <location>
        <begin position="391"/>
        <end position="394"/>
    </location>
</feature>
<feature type="repeat" description="17">
    <location>
        <begin position="398"/>
        <end position="401"/>
    </location>
</feature>
<feature type="repeat" description="18">
    <location>
        <begin position="405"/>
        <end position="408"/>
    </location>
</feature>
<feature type="repeat" description="19">
    <location>
        <begin position="410"/>
        <end position="413"/>
    </location>
</feature>
<feature type="repeat" description="20">
    <location>
        <begin position="414"/>
        <end position="417"/>
    </location>
</feature>
<feature type="repeat" description="21">
    <location>
        <begin position="438"/>
        <end position="441"/>
    </location>
</feature>
<feature type="repeat" description="22">
    <location>
        <begin position="445"/>
        <end position="448"/>
    </location>
</feature>
<feature type="repeat" description="23">
    <location>
        <begin position="458"/>
        <end position="461"/>
    </location>
</feature>
<feature type="repeat" description="24">
    <location>
        <begin position="464"/>
        <end position="467"/>
    </location>
</feature>
<feature type="repeat" description="25">
    <location>
        <begin position="468"/>
        <end position="471"/>
    </location>
</feature>
<feature type="repeat" description="26">
    <location>
        <begin position="492"/>
        <end position="495"/>
    </location>
</feature>
<feature type="repeat" description="27">
    <location>
        <begin position="499"/>
        <end position="502"/>
    </location>
</feature>
<feature type="repeat" description="28">
    <location>
        <begin position="506"/>
        <end position="509"/>
    </location>
</feature>
<feature type="repeat" description="29">
    <location>
        <begin position="511"/>
        <end position="514"/>
    </location>
</feature>
<feature type="region of interest" description="Polar" evidence="1">
    <location>
        <begin position="1"/>
        <end position="67"/>
    </location>
</feature>
<feature type="region of interest" description="Hydrophobic" evidence="1">
    <location>
        <begin position="68"/>
        <end position="162"/>
    </location>
</feature>
<feature type="region of interest" description="Disordered" evidence="4">
    <location>
        <begin position="148"/>
        <end position="169"/>
    </location>
</feature>
<feature type="region of interest" description="Disordered" evidence="4">
    <location>
        <begin position="195"/>
        <end position="543"/>
    </location>
</feature>
<feature type="region of interest" description="29 X 4 AA approximate tandem repeats of G-M-S-G">
    <location>
        <begin position="220"/>
        <end position="514"/>
    </location>
</feature>
<feature type="compositionally biased region" description="Gly residues" evidence="4">
    <location>
        <begin position="201"/>
        <end position="212"/>
    </location>
</feature>
<feature type="compositionally biased region" description="Low complexity" evidence="4">
    <location>
        <begin position="220"/>
        <end position="229"/>
    </location>
</feature>
<feature type="compositionally biased region" description="Gly residues" evidence="4">
    <location>
        <begin position="230"/>
        <end position="240"/>
    </location>
</feature>
<feature type="compositionally biased region" description="Basic residues" evidence="4">
    <location>
        <begin position="244"/>
        <end position="256"/>
    </location>
</feature>
<feature type="compositionally biased region" description="Gly residues" evidence="4">
    <location>
        <begin position="272"/>
        <end position="283"/>
    </location>
</feature>
<feature type="compositionally biased region" description="Basic residues" evidence="4">
    <location>
        <begin position="285"/>
        <end position="301"/>
    </location>
</feature>
<feature type="compositionally biased region" description="Gly residues" evidence="4">
    <location>
        <begin position="315"/>
        <end position="326"/>
    </location>
</feature>
<feature type="compositionally biased region" description="Basic residues" evidence="4">
    <location>
        <begin position="328"/>
        <end position="344"/>
    </location>
</feature>
<feature type="compositionally biased region" description="Low complexity" evidence="4">
    <location>
        <begin position="345"/>
        <end position="357"/>
    </location>
</feature>
<feature type="compositionally biased region" description="Gly residues" evidence="4">
    <location>
        <begin position="358"/>
        <end position="370"/>
    </location>
</feature>
<feature type="compositionally biased region" description="Basic residues" evidence="4">
    <location>
        <begin position="371"/>
        <end position="387"/>
    </location>
</feature>
<feature type="compositionally biased region" description="Gly residues" evidence="4">
    <location>
        <begin position="405"/>
        <end position="416"/>
    </location>
</feature>
<feature type="compositionally biased region" description="Gly residues" evidence="4">
    <location>
        <begin position="440"/>
        <end position="470"/>
    </location>
</feature>
<feature type="compositionally biased region" description="Basic residues" evidence="4">
    <location>
        <begin position="471"/>
        <end position="492"/>
    </location>
</feature>
<feature type="compositionally biased region" description="Gly residues" evidence="4">
    <location>
        <begin position="495"/>
        <end position="505"/>
    </location>
</feature>
<feature type="compositionally biased region" description="Basic residues" evidence="4">
    <location>
        <begin position="518"/>
        <end position="531"/>
    </location>
</feature>
<feature type="compositionally biased region" description="Gly residues" evidence="4">
    <location>
        <begin position="532"/>
        <end position="543"/>
    </location>
</feature>
<feature type="splice variant" id="VSP_044417" description="In isoform 2." evidence="15">
    <original>GSGSKHKIGGGKHGGLRGKFGKKRGMSGSEGGMSGSEGGMSESGM</original>
    <variation>VEGVNTKSEEVNTNLEEVNTEVEVATWRSKEQWSSCSNIKQIIVH</variation>
    <location>
        <begin position="468"/>
        <end position="512"/>
    </location>
</feature>
<feature type="splice variant" id="VSP_044418" description="In isoform 2." evidence="15">
    <location>
        <begin position="513"/>
        <end position="543"/>
    </location>
</feature>
<feature type="sequence conflict" description="In Ref. 1; CAA77882/CAA77894." evidence="15" ref="1">
    <original>S</original>
    <variation>G</variation>
    <location>
        <position position="344"/>
    </location>
</feature>
<feature type="sequence conflict" description="In Ref. 1; CAA77882/CAA77894." evidence="15" ref="1">
    <original>N</original>
    <variation>K</variation>
    <location>
        <position position="381"/>
    </location>
</feature>
<feature type="sequence conflict" description="In Ref. 1; CAA77882/CAA77894." evidence="15" ref="1">
    <original>R</original>
    <variation>G</variation>
    <location>
        <position position="401"/>
    </location>
</feature>
<keyword id="KW-0025">Alternative splicing</keyword>
<keyword id="KW-0903">Direct protein sequencing</keyword>
<keyword id="KW-0272">Extracellular matrix</keyword>
<keyword id="KW-0551">Lipid droplet</keyword>
<keyword id="KW-0472">Membrane</keyword>
<keyword id="KW-1185">Reference proteome</keyword>
<keyword id="KW-0677">Repeat</keyword>
<keyword id="KW-0964">Secreted</keyword>
<keyword id="KW-0812">Transmembrane</keyword>
<keyword id="KW-1133">Transmembrane helix</keyword>
<organism>
    <name type="scientific">Arabidopsis thaliana</name>
    <name type="common">Mouse-ear cress</name>
    <dbReference type="NCBI Taxonomy" id="3702"/>
    <lineage>
        <taxon>Eukaryota</taxon>
        <taxon>Viridiplantae</taxon>
        <taxon>Streptophyta</taxon>
        <taxon>Embryophyta</taxon>
        <taxon>Tracheophyta</taxon>
        <taxon>Spermatophyta</taxon>
        <taxon>Magnoliopsida</taxon>
        <taxon>eudicotyledons</taxon>
        <taxon>Gunneridae</taxon>
        <taxon>Pentapetalae</taxon>
        <taxon>rosids</taxon>
        <taxon>malvids</taxon>
        <taxon>Brassicales</taxon>
        <taxon>Brassicaceae</taxon>
        <taxon>Camelineae</taxon>
        <taxon>Arabidopsis</taxon>
    </lineage>
</organism>
<reference key="1">
    <citation type="journal article" date="1993" name="Plant J.">
        <title>Inflorescence-specific genes from Arabidopsis thaliana encoding glycine-rich proteins.</title>
        <authorList>
            <person name="de Oliveira D.E."/>
            <person name="Franco L.O."/>
            <person name="Simoens C."/>
            <person name="Seurinck J."/>
            <person name="Coppieters J."/>
            <person name="Botterman J."/>
            <person name="Van Montagu M."/>
        </authorList>
    </citation>
    <scope>NUCLEOTIDE SEQUENCE [GENOMIC DNA / MRNA] (ISOFORM 1)</scope>
    <scope>DEVELOPMENTAL STAGE</scope>
    <scope>TISSUE SPECIFICITY</scope>
    <source>
        <strain>cv. Columbia</strain>
        <tissue>Stamen</tissue>
    </source>
</reference>
<reference key="2">
    <citation type="journal article" date="2000" name="Nature">
        <title>Sequence and analysis of chromosome 5 of the plant Arabidopsis thaliana.</title>
        <authorList>
            <person name="Tabata S."/>
            <person name="Kaneko T."/>
            <person name="Nakamura Y."/>
            <person name="Kotani H."/>
            <person name="Kato T."/>
            <person name="Asamizu E."/>
            <person name="Miyajima N."/>
            <person name="Sasamoto S."/>
            <person name="Kimura T."/>
            <person name="Hosouchi T."/>
            <person name="Kawashima K."/>
            <person name="Kohara M."/>
            <person name="Matsumoto M."/>
            <person name="Matsuno A."/>
            <person name="Muraki A."/>
            <person name="Nakayama S."/>
            <person name="Nakazaki N."/>
            <person name="Naruo K."/>
            <person name="Okumura S."/>
            <person name="Shinpo S."/>
            <person name="Takeuchi C."/>
            <person name="Wada T."/>
            <person name="Watanabe A."/>
            <person name="Yamada M."/>
            <person name="Yasuda M."/>
            <person name="Sato S."/>
            <person name="de la Bastide M."/>
            <person name="Huang E."/>
            <person name="Spiegel L."/>
            <person name="Gnoj L."/>
            <person name="O'Shaughnessy A."/>
            <person name="Preston R."/>
            <person name="Habermann K."/>
            <person name="Murray J."/>
            <person name="Johnson D."/>
            <person name="Rohlfing T."/>
            <person name="Nelson J."/>
            <person name="Stoneking T."/>
            <person name="Pepin K."/>
            <person name="Spieth J."/>
            <person name="Sekhon M."/>
            <person name="Armstrong J."/>
            <person name="Becker M."/>
            <person name="Belter E."/>
            <person name="Cordum H."/>
            <person name="Cordes M."/>
            <person name="Courtney L."/>
            <person name="Courtney W."/>
            <person name="Dante M."/>
            <person name="Du H."/>
            <person name="Edwards J."/>
            <person name="Fryman J."/>
            <person name="Haakensen B."/>
            <person name="Lamar E."/>
            <person name="Latreille P."/>
            <person name="Leonard S."/>
            <person name="Meyer R."/>
            <person name="Mulvaney E."/>
            <person name="Ozersky P."/>
            <person name="Riley A."/>
            <person name="Strowmatt C."/>
            <person name="Wagner-McPherson C."/>
            <person name="Wollam A."/>
            <person name="Yoakum M."/>
            <person name="Bell M."/>
            <person name="Dedhia N."/>
            <person name="Parnell L."/>
            <person name="Shah R."/>
            <person name="Rodriguez M."/>
            <person name="Hoon See L."/>
            <person name="Vil D."/>
            <person name="Baker J."/>
            <person name="Kirchoff K."/>
            <person name="Toth K."/>
            <person name="King L."/>
            <person name="Bahret A."/>
            <person name="Miller B."/>
            <person name="Marra M.A."/>
            <person name="Martienssen R."/>
            <person name="McCombie W.R."/>
            <person name="Wilson R.K."/>
            <person name="Murphy G."/>
            <person name="Bancroft I."/>
            <person name="Volckaert G."/>
            <person name="Wambutt R."/>
            <person name="Duesterhoeft A."/>
            <person name="Stiekema W."/>
            <person name="Pohl T."/>
            <person name="Entian K.-D."/>
            <person name="Terryn N."/>
            <person name="Hartley N."/>
            <person name="Bent E."/>
            <person name="Johnson S."/>
            <person name="Langham S.-A."/>
            <person name="McCullagh B."/>
            <person name="Robben J."/>
            <person name="Grymonprez B."/>
            <person name="Zimmermann W."/>
            <person name="Ramsperger U."/>
            <person name="Wedler H."/>
            <person name="Balke K."/>
            <person name="Wedler E."/>
            <person name="Peters S."/>
            <person name="van Staveren M."/>
            <person name="Dirkse W."/>
            <person name="Mooijman P."/>
            <person name="Klein Lankhorst R."/>
            <person name="Weitzenegger T."/>
            <person name="Bothe G."/>
            <person name="Rose M."/>
            <person name="Hauf J."/>
            <person name="Berneiser S."/>
            <person name="Hempel S."/>
            <person name="Feldpausch M."/>
            <person name="Lamberth S."/>
            <person name="Villarroel R."/>
            <person name="Gielen J."/>
            <person name="Ardiles W."/>
            <person name="Bents O."/>
            <person name="Lemcke K."/>
            <person name="Kolesov G."/>
            <person name="Mayer K.F.X."/>
            <person name="Rudd S."/>
            <person name="Schoof H."/>
            <person name="Schueller C."/>
            <person name="Zaccaria P."/>
            <person name="Mewes H.-W."/>
            <person name="Bevan M."/>
            <person name="Fransz P.F."/>
        </authorList>
    </citation>
    <scope>NUCLEOTIDE SEQUENCE [LARGE SCALE GENOMIC DNA]</scope>
    <source>
        <strain>cv. Columbia</strain>
    </source>
</reference>
<reference key="3">
    <citation type="journal article" date="2017" name="Plant J.">
        <title>Araport11: a complete reannotation of the Arabidopsis thaliana reference genome.</title>
        <authorList>
            <person name="Cheng C.Y."/>
            <person name="Krishnakumar V."/>
            <person name="Chan A.P."/>
            <person name="Thibaud-Nissen F."/>
            <person name="Schobel S."/>
            <person name="Town C.D."/>
        </authorList>
    </citation>
    <scope>GENOME REANNOTATION</scope>
    <source>
        <strain>cv. Columbia</strain>
    </source>
</reference>
<reference key="4">
    <citation type="submission" date="2006-07" db="EMBL/GenBank/DDBJ databases">
        <title>Large-scale analysis of RIKEN Arabidopsis full-length (RAFL) cDNAs.</title>
        <authorList>
            <person name="Totoki Y."/>
            <person name="Seki M."/>
            <person name="Ishida J."/>
            <person name="Nakajima M."/>
            <person name="Enju A."/>
            <person name="Kamiya A."/>
            <person name="Narusaka M."/>
            <person name="Shin-i T."/>
            <person name="Nakagawa M."/>
            <person name="Sakamoto N."/>
            <person name="Oishi K."/>
            <person name="Kohara Y."/>
            <person name="Kobayashi M."/>
            <person name="Toyoda A."/>
            <person name="Sakaki Y."/>
            <person name="Sakurai T."/>
            <person name="Iida K."/>
            <person name="Akiyama K."/>
            <person name="Satou M."/>
            <person name="Toyoda T."/>
            <person name="Konagaya A."/>
            <person name="Carninci P."/>
            <person name="Kawai J."/>
            <person name="Hayashizaki Y."/>
            <person name="Shinozaki K."/>
        </authorList>
    </citation>
    <scope>NUCLEOTIDE SEQUENCE [LARGE SCALE MRNA] (ISOFORM 1)</scope>
    <source>
        <strain>cv. Columbia</strain>
    </source>
</reference>
<reference key="5">
    <citation type="journal article" date="2001" name="Science">
        <title>Gene families from the Arabidopsis thaliana pollen coat proteome.</title>
        <authorList>
            <person name="Mayfield J.A."/>
            <person name="Fiebig A."/>
            <person name="Johnstone S.E."/>
            <person name="Preuss D."/>
        </authorList>
    </citation>
    <scope>PROTEIN SEQUENCE OF 171-189 AND 511-528</scope>
    <scope>SUBCELLULAR LOCATION</scope>
    <scope>TISSUE SPECIFICITY</scope>
</reference>
<reference key="6">
    <citation type="journal article" date="2000" name="Nat. Cell Biol.">
        <title>Rapid initiation of Arabidopsis pollination requires the oleosin-domain protein GRP17.</title>
        <authorList>
            <person name="Mayfield J.A."/>
            <person name="Preuss D."/>
        </authorList>
    </citation>
    <scope>FUNCTION</scope>
    <scope>DISRUPTION PHENOTYPE</scope>
    <scope>SUBCELLULAR LOCATION</scope>
    <scope>TISSUE SPECIFICITY</scope>
    <source>
        <strain>cv. Wassilewskija-2</strain>
    </source>
</reference>
<reference key="7">
    <citation type="journal article" date="2002" name="J. Biol. Chem.">
        <title>A novel group of oleosins is present inside the pollen of Arabidopsis.</title>
        <authorList>
            <person name="Kim H.U."/>
            <person name="Hsieh K."/>
            <person name="Ratnayake C."/>
            <person name="Huang A.H.C."/>
        </authorList>
    </citation>
    <scope>TISSUE SPECIFICITY</scope>
    <scope>DEVELOPMENTAL STAGE</scope>
</reference>
<reference key="8">
    <citation type="journal article" date="2004" name="Mol. Biol. Evol.">
        <title>Rapid evolution of a pollen-specific oleosin-like gene family from Arabidopsis thaliana and closely related species.</title>
        <authorList>
            <person name="Schein M."/>
            <person name="Yang Z."/>
            <person name="Mitchell-Olds T."/>
            <person name="Schmid K.J."/>
        </authorList>
    </citation>
    <scope>TISSUE SPECIFICITY</scope>
    <scope>GENE FAMILY</scope>
</reference>
<reference key="9">
    <citation type="journal article" date="2009" name="Sex. Plant Reprod.">
        <title>The extracellular lipase EXL4 is required for efficient hydration of Arabidopsis pollen.</title>
        <authorList>
            <person name="Updegraff E.P."/>
            <person name="Zhao F."/>
            <person name="Preuss D."/>
        </authorList>
    </citation>
    <scope>FUNCTION</scope>
    <scope>DISRUPTION PHENOTYPE</scope>
</reference>
<reference key="10">
    <citation type="journal article" date="2013" name="Plant Sci.">
        <title>Development and disintegration of tapetum-specific lipid-accumulating organelles, elaioplasts and tapetosomes, in Arabidopsis thaliana and Brassica napus.</title>
        <authorList>
            <person name="Suzuki T."/>
            <person name="Tsunekawa S."/>
            <person name="Koizuka C."/>
            <person name="Yamamoto K."/>
            <person name="Imamura J."/>
            <person name="Nakamura K."/>
            <person name="Ishiguro S."/>
        </authorList>
    </citation>
    <scope>FUNCTION</scope>
    <scope>DISRUPTION PHENOTYPE</scope>
    <scope>TISSUE SPECIFICITY</scope>
    <scope>DEVELOPMENTAL STAGE</scope>
    <scope>SUBCELLULAR LOCATION</scope>
    <scope>PROTEOLYTIC CLEAVAGE</scope>
    <source>
        <strain>cv. Columbia</strain>
        <strain>cv. Wassilewskija</strain>
        <strain>cv. Wassilewskija-2</strain>
    </source>
</reference>
<reference key="11">
    <citation type="journal article" date="2016" name="New Phytol.">
        <title>Tapetal oleosins play an essential role in tapetosome formation and protein relocation to the pollen coat.</title>
        <authorList>
            <person name="Levesque-Lemay M."/>
            <person name="Chabot D."/>
            <person name="Hubbard K."/>
            <person name="Chan J.K."/>
            <person name="Miller S."/>
            <person name="Robert L.S."/>
        </authorList>
    </citation>
    <scope>FUNCTION</scope>
    <scope>DISRUPTION PHENOTYPE</scope>
    <scope>SUBCELLULAR LOCATION</scope>
    <scope>TISSUE SPECIFICITY</scope>
    <scope>DEVELOPMENTAL STAGE</scope>
    <scope>PROTEOLYTIC CLEAVAGE</scope>
    <source>
        <strain>cv. Columbia</strain>
    </source>
</reference>
<comment type="function">
    <text evidence="5 9 11">Lipid-binding oleosin pollen coat protein required to mediate pollen recognition by stigma cells and subsequent pollen hydration (PubMed:10655594, PubMed:20033440, PubMed:26305561). Involved in anther tapetum development, especially for the physiology of tapetosomes (PubMed:26305561). Also implicated in the formation of pollen coat (PubMed:26305561).</text>
</comment>
<comment type="subcellular location">
    <subcellularLocation>
        <location evidence="5 6 11">Secreted</location>
        <location evidence="5 6 11">Extracellular space</location>
        <location evidence="5 6 11">Extracellular matrix</location>
        <location evidence="5 6 11">Pollen coat</location>
    </subcellularLocation>
    <subcellularLocation>
        <location evidence="2">Lipid droplet</location>
    </subcellularLocation>
    <subcellularLocation>
        <location evidence="3">Membrane</location>
        <topology evidence="3">Multi-pass membrane protein</topology>
    </subcellularLocation>
    <text evidence="2 10 11">Surface of oil bodies (By similarity). Oleosins exist at a monolayer lipid/water interface (By similarity). Associated with discrete organelles (e.g. granules of 1-5 um in diameter) within the anther tapetum called tapetosomes and with a network of structures previously described as fibrils or 'strings of beads' (PubMed:23602096, PubMed:26305561).</text>
</comment>
<comment type="alternative products">
    <event type="alternative splicing"/>
    <isoform>
        <id>Q9LY09-1</id>
        <name>1</name>
        <sequence type="displayed"/>
    </isoform>
    <isoform>
        <id>Q9LY09-2</id>
        <name>2</name>
        <sequence type="described" ref="VSP_044417 VSP_044418"/>
    </isoform>
</comment>
<comment type="tissue specificity">
    <text evidence="5 6 7 8 10 11 12">Flower specific, especially in anther tapetum, pollen (at protein level) and flowers florets.</text>
</comment>
<comment type="developmental stage">
    <text evidence="7 10 11 12">Mostly expressed in anthers at the later stage of flower development until tapetum degeneration (PubMed:23602096, PubMed:8220457). In flowers, present in the anther tapetum early in anther development and later in the pollen coat (PubMed:11929861, PubMed:26305561). Upon tapetum degeneration, associated with tapetosomal debris 'in transit' to the pollen cell wall in the anther locule (PubMed:23602096, PubMed:26305561). Translocates from the pollen coat at exine cavities to the site of contact between the pollen grain and a papillar cell, called 'foot', 10 minutes after pollen landing; the pollen tube elongation initiates later (about 20 minutes after pollination) at the foot (PubMed:26305561).</text>
</comment>
<comment type="PTM">
    <text evidence="10 11">Proteolytically cleaved following anther tapetal breakdown.</text>
</comment>
<comment type="disruption phenotype">
    <text evidence="5 9 11">Delayed pollen hydration and impaired competitive ability due to a failure to interact with the stigma (PubMed:10655594, PubMed:20033440). Abnormal anther tapetum development (PubMed:26305561).</text>
</comment>
<comment type="similarity">
    <text evidence="15">Belongs to the oleosin family.</text>
</comment>
<gene>
    <name evidence="13" type="primary">GRP17</name>
    <name evidence="14" type="synonym">GRP7</name>
    <name evidence="18" type="ordered locus">At5g07530</name>
    <name evidence="19" type="ORF">T2I1.240</name>
</gene>
<accession>Q9LY09</accession>
<accession>B3H5N1</accession>
<accession>Q43302</accession>
<proteinExistence type="evidence at protein level"/>
<evidence type="ECO:0000250" key="1"/>
<evidence type="ECO:0000250" key="2">
    <source>
        <dbReference type="UniProtKB" id="C3S7F0"/>
    </source>
</evidence>
<evidence type="ECO:0000255" key="3"/>
<evidence type="ECO:0000256" key="4">
    <source>
        <dbReference type="SAM" id="MobiDB-lite"/>
    </source>
</evidence>
<evidence type="ECO:0000269" key="5">
    <source>
    </source>
</evidence>
<evidence type="ECO:0000269" key="6">
    <source>
    </source>
</evidence>
<evidence type="ECO:0000269" key="7">
    <source>
    </source>
</evidence>
<evidence type="ECO:0000269" key="8">
    <source>
    </source>
</evidence>
<evidence type="ECO:0000269" key="9">
    <source>
    </source>
</evidence>
<evidence type="ECO:0000269" key="10">
    <source>
    </source>
</evidence>
<evidence type="ECO:0000269" key="11">
    <source>
    </source>
</evidence>
<evidence type="ECO:0000269" key="12">
    <source>
    </source>
</evidence>
<evidence type="ECO:0000303" key="13">
    <source>
    </source>
</evidence>
<evidence type="ECO:0000303" key="14">
    <source>
    </source>
</evidence>
<evidence type="ECO:0000305" key="15"/>
<evidence type="ECO:0000305" key="16">
    <source>
    </source>
</evidence>
<evidence type="ECO:0000305" key="17">
    <source>
    </source>
</evidence>
<evidence type="ECO:0000312" key="18">
    <source>
        <dbReference type="Araport" id="AT5G07530"/>
    </source>
</evidence>
<evidence type="ECO:0000312" key="19">
    <source>
        <dbReference type="EMBL" id="CAB87942.1"/>
    </source>
</evidence>
<sequence>MSEELSQKPSSAQSLSLREGRNRFPFLSLSQREGRFFPSLSLSERDGRKFSFLSMFSFLMPLLEVIKIIIASVASVIFVGFACVTLAGSAAALVVSTPVFIIFSPVLVPATIATVVLATGFTAGGSFGATALGLIMWLVKRRMGVKPKDNPPPAGLPPNSGAGAGGAQSLIKKSKAKSKGGLKAWCKKMLKSKFGGKKGKSGGGKSKFGGKGGKSEGEEGMSSGDEGMSGSEGGMSGGEGGKSKSGKGKLKAKLEKKKGMSGGSESEEGMSGSEGGMSGGGGSKSKSKKSKLKAKLGKKKGMSGGMSGSEEGMSGSEGGMSSGGGSKSKSKKSKLKAKLGKKKSMSGGMSGSEEGMSGSEGGMSGGGGGKSKSRKSKLKANLGKKKCMSGGMSGSEGGMSRSEGGISGGGMSGGSGSKHKIGGGKHGGLGGKFGKKRGMSGSGGGMSGSEGGVSGSEGSMSGGGMSGGSGSKHKIGGGKHGGLRGKFGKKRGMSGSEGGMSGSEGGMSESGMSGSGGGKHKIGGGKHKFGGGKHGGGGGHMAE</sequence>